<accession>A7GSP5</accession>
<sequence>MRAIYITGYMGAGKTTIGKALSKELGIDVIDTDQKIEEKQGRVIRDIFAKEGERSFRQYESEMLCSLPTKDVIITTGGGIVERIENREWMKENGTVVYLYCDPYVIADRLHEDITRPLFQKENVEAFVAKFEERRAFYEEAVIQIDTTNKSIQEVTEEILRRINS</sequence>
<keyword id="KW-0028">Amino-acid biosynthesis</keyword>
<keyword id="KW-0057">Aromatic amino acid biosynthesis</keyword>
<keyword id="KW-0067">ATP-binding</keyword>
<keyword id="KW-0963">Cytoplasm</keyword>
<keyword id="KW-0418">Kinase</keyword>
<keyword id="KW-0460">Magnesium</keyword>
<keyword id="KW-0479">Metal-binding</keyword>
<keyword id="KW-0547">Nucleotide-binding</keyword>
<keyword id="KW-0808">Transferase</keyword>
<gene>
    <name evidence="1" type="primary">aroK</name>
    <name type="ordered locus">Bcer98_2922</name>
</gene>
<comment type="function">
    <text evidence="1">Catalyzes the specific phosphorylation of the 3-hydroxyl group of shikimic acid using ATP as a cosubstrate.</text>
</comment>
<comment type="catalytic activity">
    <reaction evidence="1">
        <text>shikimate + ATP = 3-phosphoshikimate + ADP + H(+)</text>
        <dbReference type="Rhea" id="RHEA:13121"/>
        <dbReference type="ChEBI" id="CHEBI:15378"/>
        <dbReference type="ChEBI" id="CHEBI:30616"/>
        <dbReference type="ChEBI" id="CHEBI:36208"/>
        <dbReference type="ChEBI" id="CHEBI:145989"/>
        <dbReference type="ChEBI" id="CHEBI:456216"/>
        <dbReference type="EC" id="2.7.1.71"/>
    </reaction>
</comment>
<comment type="cofactor">
    <cofactor evidence="1">
        <name>Mg(2+)</name>
        <dbReference type="ChEBI" id="CHEBI:18420"/>
    </cofactor>
    <text evidence="1">Binds 1 Mg(2+) ion per subunit.</text>
</comment>
<comment type="pathway">
    <text evidence="1">Metabolic intermediate biosynthesis; chorismate biosynthesis; chorismate from D-erythrose 4-phosphate and phosphoenolpyruvate: step 5/7.</text>
</comment>
<comment type="subunit">
    <text evidence="1">Monomer.</text>
</comment>
<comment type="subcellular location">
    <subcellularLocation>
        <location evidence="1">Cytoplasm</location>
    </subcellularLocation>
</comment>
<comment type="similarity">
    <text evidence="1">Belongs to the shikimate kinase family.</text>
</comment>
<evidence type="ECO:0000255" key="1">
    <source>
        <dbReference type="HAMAP-Rule" id="MF_00109"/>
    </source>
</evidence>
<name>AROK_BACCN</name>
<proteinExistence type="inferred from homology"/>
<dbReference type="EC" id="2.7.1.71" evidence="1"/>
<dbReference type="EMBL" id="CP000764">
    <property type="protein sequence ID" value="ABS23153.1"/>
    <property type="molecule type" value="Genomic_DNA"/>
</dbReference>
<dbReference type="RefSeq" id="WP_012095381.1">
    <property type="nucleotide sequence ID" value="NC_009674.1"/>
</dbReference>
<dbReference type="SMR" id="A7GSP5"/>
<dbReference type="STRING" id="315749.Bcer98_2922"/>
<dbReference type="GeneID" id="33898173"/>
<dbReference type="KEGG" id="bcy:Bcer98_2922"/>
<dbReference type="eggNOG" id="COG0703">
    <property type="taxonomic scope" value="Bacteria"/>
</dbReference>
<dbReference type="HOGENOM" id="CLU_057607_4_3_9"/>
<dbReference type="OrthoDB" id="9800332at2"/>
<dbReference type="UniPathway" id="UPA00053">
    <property type="reaction ID" value="UER00088"/>
</dbReference>
<dbReference type="Proteomes" id="UP000002300">
    <property type="component" value="Chromosome"/>
</dbReference>
<dbReference type="GO" id="GO:0005829">
    <property type="term" value="C:cytosol"/>
    <property type="evidence" value="ECO:0007669"/>
    <property type="project" value="TreeGrafter"/>
</dbReference>
<dbReference type="GO" id="GO:0005524">
    <property type="term" value="F:ATP binding"/>
    <property type="evidence" value="ECO:0007669"/>
    <property type="project" value="UniProtKB-UniRule"/>
</dbReference>
<dbReference type="GO" id="GO:0000287">
    <property type="term" value="F:magnesium ion binding"/>
    <property type="evidence" value="ECO:0007669"/>
    <property type="project" value="UniProtKB-UniRule"/>
</dbReference>
<dbReference type="GO" id="GO:0004765">
    <property type="term" value="F:shikimate kinase activity"/>
    <property type="evidence" value="ECO:0007669"/>
    <property type="project" value="UniProtKB-UniRule"/>
</dbReference>
<dbReference type="GO" id="GO:0008652">
    <property type="term" value="P:amino acid biosynthetic process"/>
    <property type="evidence" value="ECO:0007669"/>
    <property type="project" value="UniProtKB-KW"/>
</dbReference>
<dbReference type="GO" id="GO:0009073">
    <property type="term" value="P:aromatic amino acid family biosynthetic process"/>
    <property type="evidence" value="ECO:0007669"/>
    <property type="project" value="UniProtKB-KW"/>
</dbReference>
<dbReference type="GO" id="GO:0009423">
    <property type="term" value="P:chorismate biosynthetic process"/>
    <property type="evidence" value="ECO:0007669"/>
    <property type="project" value="UniProtKB-UniRule"/>
</dbReference>
<dbReference type="CDD" id="cd00464">
    <property type="entry name" value="SK"/>
    <property type="match status" value="1"/>
</dbReference>
<dbReference type="Gene3D" id="3.40.50.300">
    <property type="entry name" value="P-loop containing nucleotide triphosphate hydrolases"/>
    <property type="match status" value="1"/>
</dbReference>
<dbReference type="HAMAP" id="MF_00109">
    <property type="entry name" value="Shikimate_kinase"/>
    <property type="match status" value="1"/>
</dbReference>
<dbReference type="InterPro" id="IPR027417">
    <property type="entry name" value="P-loop_NTPase"/>
</dbReference>
<dbReference type="InterPro" id="IPR031322">
    <property type="entry name" value="Shikimate/glucono_kinase"/>
</dbReference>
<dbReference type="InterPro" id="IPR000623">
    <property type="entry name" value="Shikimate_kinase/TSH1"/>
</dbReference>
<dbReference type="PANTHER" id="PTHR21087">
    <property type="entry name" value="SHIKIMATE KINASE"/>
    <property type="match status" value="1"/>
</dbReference>
<dbReference type="PANTHER" id="PTHR21087:SF16">
    <property type="entry name" value="SHIKIMATE KINASE 1, CHLOROPLASTIC"/>
    <property type="match status" value="1"/>
</dbReference>
<dbReference type="Pfam" id="PF01202">
    <property type="entry name" value="SKI"/>
    <property type="match status" value="1"/>
</dbReference>
<dbReference type="PRINTS" id="PR01100">
    <property type="entry name" value="SHIKIMTKNASE"/>
</dbReference>
<dbReference type="SUPFAM" id="SSF52540">
    <property type="entry name" value="P-loop containing nucleoside triphosphate hydrolases"/>
    <property type="match status" value="1"/>
</dbReference>
<protein>
    <recommendedName>
        <fullName evidence="1">Shikimate kinase</fullName>
        <shortName evidence="1">SK</shortName>
        <ecNumber evidence="1">2.7.1.71</ecNumber>
    </recommendedName>
</protein>
<organism>
    <name type="scientific">Bacillus cytotoxicus (strain DSM 22905 / CIP 110041 / 391-98 / NVH 391-98)</name>
    <dbReference type="NCBI Taxonomy" id="315749"/>
    <lineage>
        <taxon>Bacteria</taxon>
        <taxon>Bacillati</taxon>
        <taxon>Bacillota</taxon>
        <taxon>Bacilli</taxon>
        <taxon>Bacillales</taxon>
        <taxon>Bacillaceae</taxon>
        <taxon>Bacillus</taxon>
        <taxon>Bacillus cereus group</taxon>
    </lineage>
</organism>
<feature type="chain" id="PRO_1000075946" description="Shikimate kinase">
    <location>
        <begin position="1"/>
        <end position="165"/>
    </location>
</feature>
<feature type="binding site" evidence="1">
    <location>
        <begin position="11"/>
        <end position="16"/>
    </location>
    <ligand>
        <name>ATP</name>
        <dbReference type="ChEBI" id="CHEBI:30616"/>
    </ligand>
</feature>
<feature type="binding site" evidence="1">
    <location>
        <position position="15"/>
    </location>
    <ligand>
        <name>Mg(2+)</name>
        <dbReference type="ChEBI" id="CHEBI:18420"/>
    </ligand>
</feature>
<feature type="binding site" evidence="1">
    <location>
        <position position="33"/>
    </location>
    <ligand>
        <name>substrate</name>
    </ligand>
</feature>
<feature type="binding site" evidence="1">
    <location>
        <position position="57"/>
    </location>
    <ligand>
        <name>substrate</name>
    </ligand>
</feature>
<feature type="binding site" evidence="1">
    <location>
        <position position="78"/>
    </location>
    <ligand>
        <name>substrate</name>
    </ligand>
</feature>
<feature type="binding site" evidence="1">
    <location>
        <position position="116"/>
    </location>
    <ligand>
        <name>ATP</name>
        <dbReference type="ChEBI" id="CHEBI:30616"/>
    </ligand>
</feature>
<feature type="binding site" evidence="1">
    <location>
        <position position="134"/>
    </location>
    <ligand>
        <name>substrate</name>
    </ligand>
</feature>
<reference key="1">
    <citation type="journal article" date="2008" name="Chem. Biol. Interact.">
        <title>Extending the Bacillus cereus group genomics to putative food-borne pathogens of different toxicity.</title>
        <authorList>
            <person name="Lapidus A."/>
            <person name="Goltsman E."/>
            <person name="Auger S."/>
            <person name="Galleron N."/>
            <person name="Segurens B."/>
            <person name="Dossat C."/>
            <person name="Land M.L."/>
            <person name="Broussolle V."/>
            <person name="Brillard J."/>
            <person name="Guinebretiere M.-H."/>
            <person name="Sanchis V."/>
            <person name="Nguen-the C."/>
            <person name="Lereclus D."/>
            <person name="Richardson P."/>
            <person name="Wincker P."/>
            <person name="Weissenbach J."/>
            <person name="Ehrlich S.D."/>
            <person name="Sorokin A."/>
        </authorList>
    </citation>
    <scope>NUCLEOTIDE SEQUENCE [LARGE SCALE GENOMIC DNA]</scope>
    <source>
        <strain>DSM 22905 / CIP 110041 / 391-98 / NVH 391-98</strain>
    </source>
</reference>